<dbReference type="EMBL" id="AP002983">
    <property type="protein sequence ID" value="BAB33224.1"/>
    <property type="molecule type" value="Genomic_DNA"/>
</dbReference>
<dbReference type="RefSeq" id="NP_084825.1">
    <property type="nucleotide sequence ID" value="NC_002694.1"/>
</dbReference>
<dbReference type="SMR" id="P68859"/>
<dbReference type="GeneID" id="802917"/>
<dbReference type="GO" id="GO:0009535">
    <property type="term" value="C:chloroplast thylakoid membrane"/>
    <property type="evidence" value="ECO:0007669"/>
    <property type="project" value="UniProtKB-SubCell"/>
</dbReference>
<dbReference type="GO" id="GO:0015979">
    <property type="term" value="P:photosynthesis"/>
    <property type="evidence" value="ECO:0007669"/>
    <property type="project" value="InterPro"/>
</dbReference>
<dbReference type="HAMAP" id="MF_00293">
    <property type="entry name" value="PSII_PsbN"/>
    <property type="match status" value="1"/>
</dbReference>
<dbReference type="InterPro" id="IPR003398">
    <property type="entry name" value="PSII_PsbN"/>
</dbReference>
<dbReference type="PANTHER" id="PTHR35326">
    <property type="entry name" value="PROTEIN PSBN"/>
    <property type="match status" value="1"/>
</dbReference>
<dbReference type="PANTHER" id="PTHR35326:SF3">
    <property type="entry name" value="PROTEIN PSBN"/>
    <property type="match status" value="1"/>
</dbReference>
<dbReference type="Pfam" id="PF02468">
    <property type="entry name" value="PsbN"/>
    <property type="match status" value="1"/>
</dbReference>
<protein>
    <recommendedName>
        <fullName evidence="1">Protein PsbN</fullName>
    </recommendedName>
</protein>
<name>PSBN_LOTJA</name>
<accession>P68859</accession>
<accession>P12171</accession>
<feature type="chain" id="PRO_0000207918" description="Protein PsbN">
    <location>
        <begin position="1"/>
        <end position="43"/>
    </location>
</feature>
<feature type="transmembrane region" description="Helical" evidence="1">
    <location>
        <begin position="5"/>
        <end position="27"/>
    </location>
</feature>
<keyword id="KW-0150">Chloroplast</keyword>
<keyword id="KW-0472">Membrane</keyword>
<keyword id="KW-0934">Plastid</keyword>
<keyword id="KW-0793">Thylakoid</keyword>
<keyword id="KW-0812">Transmembrane</keyword>
<keyword id="KW-1133">Transmembrane helix</keyword>
<gene>
    <name evidence="1" type="primary">psbN</name>
</gene>
<geneLocation type="chloroplast"/>
<reference key="1">
    <citation type="journal article" date="2000" name="DNA Res.">
        <title>Complete structure of the chloroplast genome of a legume, Lotus japonicus.</title>
        <authorList>
            <person name="Kato T."/>
            <person name="Kaneko T."/>
            <person name="Sato S."/>
            <person name="Nakamura Y."/>
            <person name="Tabata S."/>
        </authorList>
    </citation>
    <scope>NUCLEOTIDE SEQUENCE [LARGE SCALE GENOMIC DNA]</scope>
    <source>
        <strain>cv. Miyakojima MG-20</strain>
    </source>
</reference>
<comment type="function">
    <text evidence="1">May play a role in photosystem I and II biogenesis.</text>
</comment>
<comment type="subcellular location">
    <subcellularLocation>
        <location evidence="1">Plastid</location>
        <location evidence="1">Chloroplast thylakoid membrane</location>
        <topology evidence="1">Single-pass membrane protein</topology>
    </subcellularLocation>
</comment>
<comment type="similarity">
    <text evidence="1">Belongs to the PsbN family.</text>
</comment>
<comment type="caution">
    <text evidence="1">Originally thought to be a component of PSII; based on experiments in Synechocystis, N.tabacum and barley, and its absence from PSII in T.elongatus and T.vulcanus, this is probably not true.</text>
</comment>
<sequence>METATLVAISISGLLVSFTGYALYTAFGQPSQQLRDPFEEHGD</sequence>
<evidence type="ECO:0000255" key="1">
    <source>
        <dbReference type="HAMAP-Rule" id="MF_00293"/>
    </source>
</evidence>
<organism>
    <name type="scientific">Lotus japonicus</name>
    <name type="common">Lotus corniculatus var. japonicus</name>
    <dbReference type="NCBI Taxonomy" id="34305"/>
    <lineage>
        <taxon>Eukaryota</taxon>
        <taxon>Viridiplantae</taxon>
        <taxon>Streptophyta</taxon>
        <taxon>Embryophyta</taxon>
        <taxon>Tracheophyta</taxon>
        <taxon>Spermatophyta</taxon>
        <taxon>Magnoliopsida</taxon>
        <taxon>eudicotyledons</taxon>
        <taxon>Gunneridae</taxon>
        <taxon>Pentapetalae</taxon>
        <taxon>rosids</taxon>
        <taxon>fabids</taxon>
        <taxon>Fabales</taxon>
        <taxon>Fabaceae</taxon>
        <taxon>Papilionoideae</taxon>
        <taxon>50 kb inversion clade</taxon>
        <taxon>NPAAA clade</taxon>
        <taxon>Hologalegina</taxon>
        <taxon>robinioid clade</taxon>
        <taxon>Loteae</taxon>
        <taxon>Lotus</taxon>
    </lineage>
</organism>
<proteinExistence type="inferred from homology"/>